<protein>
    <recommendedName>
        <fullName>1-aminocyclopropane-1-carboxylate synthase</fullName>
        <shortName>ACC synthase</shortName>
        <ecNumber>4.4.1.14</ecNumber>
    </recommendedName>
    <alternativeName>
        <fullName>S-adenosyl-L-methionine methylthioadenosine-lyase</fullName>
    </alternativeName>
</protein>
<sequence length="484" mass="54731">MGLMDVDQTQLLSKMVIGDGHGEASPYFDGWKAYDENPFHPKENPNGVIQMGLAENQLTSDLVEDWILNNPEASICTPEGINDFRAIANFQDYHGLPEFRNAVAKFMGRTRGNRVTFDPDRIVMSGGATGAHEVTTFCLADPGDAFLVPIPYYPGFDRDLRWRTGIKLVPVMCDSSNNFKLTKQALEDAYEKAKEDNIRVKGLLITNPSNPLGTVMDRNTLRTVMSFINEKRIHLVSDEIYSATVFSHPSFISIAEILEEDTDIECDRNLVHIVYSLSKDMGFPGFRVGIIYSYNDAVVHCARKMSSFGLVSTQTQYLLASMLNDDEFVESFLVESAKRLAQRHRVFTGGLAKVGIKCLQSNAGLFVWMDLRQLLKKPTLDSEMELWRVIIDEVKINVSPGSSFHCTEPGWFRVCYANMDDMAVQIALQRIRNFVLQNKEIMVPNKKHCWHSNLRLSLKTRRFDDIMMSPHSPIPQSPLVKATI</sequence>
<evidence type="ECO:0000250" key="1"/>
<evidence type="ECO:0000305" key="2"/>
<gene>
    <name type="primary">ACS1</name>
</gene>
<feature type="chain" id="PRO_0000123919" description="1-aminocyclopropane-1-carboxylate synthase">
    <location>
        <begin position="1"/>
        <end position="484"/>
    </location>
</feature>
<feature type="modified residue" description="N6-(pyridoxal phosphate)lysine" evidence="1">
    <location>
        <position position="279"/>
    </location>
</feature>
<proteinExistence type="evidence at transcript level"/>
<keyword id="KW-0266">Ethylene biosynthesis</keyword>
<keyword id="KW-0292">Fruit ripening</keyword>
<keyword id="KW-0456">Lyase</keyword>
<keyword id="KW-0663">Pyridoxal phosphate</keyword>
<keyword id="KW-1185">Reference proteome</keyword>
<keyword id="KW-0949">S-adenosyl-L-methionine</keyword>
<name>1A1C_SOYBN</name>
<accession>P31531</accession>
<comment type="function">
    <text>Catalyzes the formation of 1-aminocyclopropane-1-carboxylate, a direct precursor of ethylene in higher plants.</text>
</comment>
<comment type="catalytic activity">
    <reaction>
        <text>S-adenosyl-L-methionine = 1-aminocyclopropane-1-carboxylate + S-methyl-5'-thioadenosine + H(+)</text>
        <dbReference type="Rhea" id="RHEA:21744"/>
        <dbReference type="ChEBI" id="CHEBI:15378"/>
        <dbReference type="ChEBI" id="CHEBI:17509"/>
        <dbReference type="ChEBI" id="CHEBI:58360"/>
        <dbReference type="ChEBI" id="CHEBI:59789"/>
        <dbReference type="EC" id="4.4.1.14"/>
    </reaction>
</comment>
<comment type="cofactor">
    <cofactor>
        <name>pyridoxal 5'-phosphate</name>
        <dbReference type="ChEBI" id="CHEBI:597326"/>
    </cofactor>
</comment>
<comment type="pathway">
    <text>Alkene biosynthesis; ethylene biosynthesis via S-adenosyl-L-methionine; ethylene from S-adenosyl-L-methionine: step 1/2.</text>
</comment>
<comment type="subunit">
    <text>Homodimer.</text>
</comment>
<comment type="similarity">
    <text evidence="2">Belongs to the class-I pyridoxal-phosphate-dependent aminotransferase family.</text>
</comment>
<organism>
    <name type="scientific">Glycine max</name>
    <name type="common">Soybean</name>
    <name type="synonym">Glycine hispida</name>
    <dbReference type="NCBI Taxonomy" id="3847"/>
    <lineage>
        <taxon>Eukaryota</taxon>
        <taxon>Viridiplantae</taxon>
        <taxon>Streptophyta</taxon>
        <taxon>Embryophyta</taxon>
        <taxon>Tracheophyta</taxon>
        <taxon>Spermatophyta</taxon>
        <taxon>Magnoliopsida</taxon>
        <taxon>eudicotyledons</taxon>
        <taxon>Gunneridae</taxon>
        <taxon>Pentapetalae</taxon>
        <taxon>rosids</taxon>
        <taxon>fabids</taxon>
        <taxon>Fabales</taxon>
        <taxon>Fabaceae</taxon>
        <taxon>Papilionoideae</taxon>
        <taxon>50 kb inversion clade</taxon>
        <taxon>NPAAA clade</taxon>
        <taxon>indigoferoid/millettioid clade</taxon>
        <taxon>Phaseoleae</taxon>
        <taxon>Glycine</taxon>
        <taxon>Glycine subgen. Soja</taxon>
    </lineage>
</organism>
<dbReference type="EC" id="4.4.1.14"/>
<dbReference type="EMBL" id="X67100">
    <property type="protein sequence ID" value="CAA47474.1"/>
    <property type="molecule type" value="mRNA"/>
</dbReference>
<dbReference type="PIR" id="S25002">
    <property type="entry name" value="S25002"/>
</dbReference>
<dbReference type="RefSeq" id="NP_001236858.1">
    <property type="nucleotide sequence ID" value="NM_001249929.2"/>
</dbReference>
<dbReference type="SMR" id="P31531"/>
<dbReference type="FunCoup" id="P31531">
    <property type="interactions" value="651"/>
</dbReference>
<dbReference type="STRING" id="3847.P31531"/>
<dbReference type="PaxDb" id="3847-GLYMA05G37410.2"/>
<dbReference type="EnsemblPlants" id="KRH59970">
    <property type="protein sequence ID" value="KRH59970"/>
    <property type="gene ID" value="GLYMA_05G211700"/>
</dbReference>
<dbReference type="GeneID" id="547976"/>
<dbReference type="Gramene" id="KRH59970">
    <property type="protein sequence ID" value="KRH59970"/>
    <property type="gene ID" value="GLYMA_05G211700"/>
</dbReference>
<dbReference type="KEGG" id="gmx:547976"/>
<dbReference type="eggNOG" id="KOG0256">
    <property type="taxonomic scope" value="Eukaryota"/>
</dbReference>
<dbReference type="HOGENOM" id="CLU_017584_1_0_1"/>
<dbReference type="InParanoid" id="P31531"/>
<dbReference type="OMA" id="TYAMSAG"/>
<dbReference type="OrthoDB" id="691673at2759"/>
<dbReference type="BRENDA" id="4.4.1.14">
    <property type="organism ID" value="2483"/>
</dbReference>
<dbReference type="UniPathway" id="UPA00384">
    <property type="reaction ID" value="UER00562"/>
</dbReference>
<dbReference type="Proteomes" id="UP000008827">
    <property type="component" value="Chromosome 5"/>
</dbReference>
<dbReference type="GO" id="GO:0016847">
    <property type="term" value="F:1-aminocyclopropane-1-carboxylate synthase activity"/>
    <property type="evidence" value="ECO:0007669"/>
    <property type="project" value="UniProtKB-EC"/>
</dbReference>
<dbReference type="GO" id="GO:0030170">
    <property type="term" value="F:pyridoxal phosphate binding"/>
    <property type="evidence" value="ECO:0007669"/>
    <property type="project" value="InterPro"/>
</dbReference>
<dbReference type="GO" id="GO:0008483">
    <property type="term" value="F:transaminase activity"/>
    <property type="evidence" value="ECO:0000318"/>
    <property type="project" value="GO_Central"/>
</dbReference>
<dbReference type="GO" id="GO:0006520">
    <property type="term" value="P:amino acid metabolic process"/>
    <property type="evidence" value="ECO:0000318"/>
    <property type="project" value="GO_Central"/>
</dbReference>
<dbReference type="GO" id="GO:0009693">
    <property type="term" value="P:ethylene biosynthetic process"/>
    <property type="evidence" value="ECO:0007669"/>
    <property type="project" value="UniProtKB-UniPathway"/>
</dbReference>
<dbReference type="GO" id="GO:0009835">
    <property type="term" value="P:fruit ripening"/>
    <property type="evidence" value="ECO:0007669"/>
    <property type="project" value="UniProtKB-KW"/>
</dbReference>
<dbReference type="CDD" id="cd00609">
    <property type="entry name" value="AAT_like"/>
    <property type="match status" value="1"/>
</dbReference>
<dbReference type="FunFam" id="3.40.640.10:FF:000051">
    <property type="entry name" value="1-aminocyclopropane-1-carboxylate synthase 3"/>
    <property type="match status" value="1"/>
</dbReference>
<dbReference type="Gene3D" id="3.90.1150.10">
    <property type="entry name" value="Aspartate Aminotransferase, domain 1"/>
    <property type="match status" value="1"/>
</dbReference>
<dbReference type="Gene3D" id="3.40.640.10">
    <property type="entry name" value="Type I PLP-dependent aspartate aminotransferase-like (Major domain)"/>
    <property type="match status" value="1"/>
</dbReference>
<dbReference type="InterPro" id="IPR004839">
    <property type="entry name" value="Aminotransferase_I/II_large"/>
</dbReference>
<dbReference type="InterPro" id="IPR050478">
    <property type="entry name" value="Ethylene_sulfur-biosynth"/>
</dbReference>
<dbReference type="InterPro" id="IPR004838">
    <property type="entry name" value="NHTrfase_class1_PyrdxlP-BS"/>
</dbReference>
<dbReference type="InterPro" id="IPR015424">
    <property type="entry name" value="PyrdxlP-dep_Trfase"/>
</dbReference>
<dbReference type="InterPro" id="IPR015421">
    <property type="entry name" value="PyrdxlP-dep_Trfase_major"/>
</dbReference>
<dbReference type="InterPro" id="IPR015422">
    <property type="entry name" value="PyrdxlP-dep_Trfase_small"/>
</dbReference>
<dbReference type="PANTHER" id="PTHR43795:SF6">
    <property type="entry name" value="1-AMINOCYCLOPROPANE-1-CARBOXYLATE SYNTHASE 6"/>
    <property type="match status" value="1"/>
</dbReference>
<dbReference type="PANTHER" id="PTHR43795">
    <property type="entry name" value="BIFUNCTIONAL ASPARTATE AMINOTRANSFERASE AND GLUTAMATE/ASPARTATE-PREPHENATE AMINOTRANSFERASE-RELATED"/>
    <property type="match status" value="1"/>
</dbReference>
<dbReference type="Pfam" id="PF00155">
    <property type="entry name" value="Aminotran_1_2"/>
    <property type="match status" value="1"/>
</dbReference>
<dbReference type="PRINTS" id="PR00753">
    <property type="entry name" value="ACCSYNTHASE"/>
</dbReference>
<dbReference type="SUPFAM" id="SSF53383">
    <property type="entry name" value="PLP-dependent transferases"/>
    <property type="match status" value="1"/>
</dbReference>
<dbReference type="PROSITE" id="PS00105">
    <property type="entry name" value="AA_TRANSFER_CLASS_1"/>
    <property type="match status" value="1"/>
</dbReference>
<reference key="1">
    <citation type="submission" date="1992-06" db="EMBL/GenBank/DDBJ databases">
        <authorList>
            <person name="Liu D."/>
            <person name="Li N."/>
            <person name="Mattoo A.K."/>
        </authorList>
    </citation>
    <scope>NUCLEOTIDE SEQUENCE [MRNA]</scope>
    <source>
        <strain>cv. Century</strain>
        <tissue>Leaf</tissue>
    </source>
</reference>